<comment type="function">
    <text evidence="1">Participates actively in the response to hyperosmotic and heat shock by preventing the aggregation of stress-denatured proteins and by disaggregating proteins, also in an autonomous, DnaK-independent fashion. Unfolded proteins bind initially to DnaJ; upon interaction with the DnaJ-bound protein, DnaK hydrolyzes its bound ATP, resulting in the formation of a stable complex. GrpE releases ADP from DnaK; ATP binding to DnaK triggers the release of the substrate protein, thus completing the reaction cycle. Several rounds of ATP-dependent interactions between DnaJ, DnaK and GrpE are required for fully efficient folding. Also involved, together with DnaK and GrpE, in the DNA replication of plasmids through activation of initiation proteins.</text>
</comment>
<comment type="cofactor">
    <cofactor evidence="1">
        <name>Zn(2+)</name>
        <dbReference type="ChEBI" id="CHEBI:29105"/>
    </cofactor>
    <text evidence="1">Binds 2 Zn(2+) ions per monomer.</text>
</comment>
<comment type="subunit">
    <text evidence="1">Homodimer.</text>
</comment>
<comment type="subcellular location">
    <subcellularLocation>
        <location evidence="1">Cytoplasm</location>
    </subcellularLocation>
</comment>
<comment type="domain">
    <text evidence="1">The J domain is necessary and sufficient to stimulate DnaK ATPase activity. Zinc center 1 plays an important role in the autonomous, DnaK-independent chaperone activity of DnaJ. Zinc center 2 is essential for interaction with DnaK and for DnaJ activity.</text>
</comment>
<comment type="similarity">
    <text evidence="1">Belongs to the DnaJ family.</text>
</comment>
<keyword id="KW-0143">Chaperone</keyword>
<keyword id="KW-0963">Cytoplasm</keyword>
<keyword id="KW-0235">DNA replication</keyword>
<keyword id="KW-0479">Metal-binding</keyword>
<keyword id="KW-0677">Repeat</keyword>
<keyword id="KW-0346">Stress response</keyword>
<keyword id="KW-0862">Zinc</keyword>
<keyword id="KW-0863">Zinc-finger</keyword>
<feature type="chain" id="PRO_1000085298" description="Chaperone protein DnaJ">
    <location>
        <begin position="1"/>
        <end position="377"/>
    </location>
</feature>
<feature type="domain" description="J" evidence="1">
    <location>
        <begin position="5"/>
        <end position="70"/>
    </location>
</feature>
<feature type="repeat" description="CXXCXGXG motif">
    <location>
        <begin position="146"/>
        <end position="153"/>
    </location>
</feature>
<feature type="repeat" description="CXXCXGXG motif">
    <location>
        <begin position="163"/>
        <end position="170"/>
    </location>
</feature>
<feature type="repeat" description="CXXCXGXG motif">
    <location>
        <begin position="185"/>
        <end position="192"/>
    </location>
</feature>
<feature type="repeat" description="CXXCXGXG motif">
    <location>
        <begin position="199"/>
        <end position="206"/>
    </location>
</feature>
<feature type="zinc finger region" description="CR-type" evidence="1">
    <location>
        <begin position="133"/>
        <end position="211"/>
    </location>
</feature>
<feature type="binding site" evidence="1">
    <location>
        <position position="146"/>
    </location>
    <ligand>
        <name>Zn(2+)</name>
        <dbReference type="ChEBI" id="CHEBI:29105"/>
        <label>1</label>
    </ligand>
</feature>
<feature type="binding site" evidence="1">
    <location>
        <position position="149"/>
    </location>
    <ligand>
        <name>Zn(2+)</name>
        <dbReference type="ChEBI" id="CHEBI:29105"/>
        <label>1</label>
    </ligand>
</feature>
<feature type="binding site" evidence="1">
    <location>
        <position position="163"/>
    </location>
    <ligand>
        <name>Zn(2+)</name>
        <dbReference type="ChEBI" id="CHEBI:29105"/>
        <label>2</label>
    </ligand>
</feature>
<feature type="binding site" evidence="1">
    <location>
        <position position="166"/>
    </location>
    <ligand>
        <name>Zn(2+)</name>
        <dbReference type="ChEBI" id="CHEBI:29105"/>
        <label>2</label>
    </ligand>
</feature>
<feature type="binding site" evidence="1">
    <location>
        <position position="185"/>
    </location>
    <ligand>
        <name>Zn(2+)</name>
        <dbReference type="ChEBI" id="CHEBI:29105"/>
        <label>2</label>
    </ligand>
</feature>
<feature type="binding site" evidence="1">
    <location>
        <position position="188"/>
    </location>
    <ligand>
        <name>Zn(2+)</name>
        <dbReference type="ChEBI" id="CHEBI:29105"/>
        <label>2</label>
    </ligand>
</feature>
<feature type="binding site" evidence="1">
    <location>
        <position position="199"/>
    </location>
    <ligand>
        <name>Zn(2+)</name>
        <dbReference type="ChEBI" id="CHEBI:29105"/>
        <label>1</label>
    </ligand>
</feature>
<feature type="binding site" evidence="1">
    <location>
        <position position="202"/>
    </location>
    <ligand>
        <name>Zn(2+)</name>
        <dbReference type="ChEBI" id="CHEBI:29105"/>
        <label>1</label>
    </ligand>
</feature>
<reference key="1">
    <citation type="submission" date="2006-08" db="EMBL/GenBank/DDBJ databases">
        <title>Complete sequence of Shewanella sp. MR-4.</title>
        <authorList>
            <consortium name="US DOE Joint Genome Institute"/>
            <person name="Copeland A."/>
            <person name="Lucas S."/>
            <person name="Lapidus A."/>
            <person name="Barry K."/>
            <person name="Detter J.C."/>
            <person name="Glavina del Rio T."/>
            <person name="Hammon N."/>
            <person name="Israni S."/>
            <person name="Dalin E."/>
            <person name="Tice H."/>
            <person name="Pitluck S."/>
            <person name="Kiss H."/>
            <person name="Brettin T."/>
            <person name="Bruce D."/>
            <person name="Han C."/>
            <person name="Tapia R."/>
            <person name="Gilna P."/>
            <person name="Schmutz J."/>
            <person name="Larimer F."/>
            <person name="Land M."/>
            <person name="Hauser L."/>
            <person name="Kyrpides N."/>
            <person name="Mikhailova N."/>
            <person name="Nealson K."/>
            <person name="Konstantinidis K."/>
            <person name="Klappenbach J."/>
            <person name="Tiedje J."/>
            <person name="Richardson P."/>
        </authorList>
    </citation>
    <scope>NUCLEOTIDE SEQUENCE [LARGE SCALE GENOMIC DNA]</scope>
    <source>
        <strain>MR-4</strain>
    </source>
</reference>
<gene>
    <name evidence="1" type="primary">dnaJ</name>
    <name type="ordered locus">Shewmr4_0958</name>
</gene>
<accession>Q0HLM9</accession>
<protein>
    <recommendedName>
        <fullName evidence="1">Chaperone protein DnaJ</fullName>
    </recommendedName>
</protein>
<proteinExistence type="inferred from homology"/>
<evidence type="ECO:0000255" key="1">
    <source>
        <dbReference type="HAMAP-Rule" id="MF_01152"/>
    </source>
</evidence>
<sequence>MSKRDYYEVLGVGRDASEREIKKAYKRLAMKFHPDRNPGDKAAEASFKEVKEAYEILTDANKKAAYDQFGHAGVDPNRGGGGGYGGAGDFGDIFGDVFGDIFGGGRRGGQRQAARGSDLRYNLELSLEEAVKGLTKELRIPTLASCDVCDGSGAKKGTSATTCGTCHGQGQVQMRQGFFTVQQACPTCHGRGKIIKDPCTKCHGDGRVEKTKTLSVKIPAGVDTGDRIRLAGEGEAGEFGAPPGDLYVQVTVREHAIFVRDGNNLYCEVPISFSKAALGGEIEVPTLDGKVSLKIPAETQTGRMFRLRGKGVKSVRSHAVGDLLCKVVMETPVNLNERQKELLREFEATLTGESKKHSPKAEGFFDGVKKFFQDLNS</sequence>
<dbReference type="EMBL" id="CP000446">
    <property type="protein sequence ID" value="ABI38038.1"/>
    <property type="molecule type" value="Genomic_DNA"/>
</dbReference>
<dbReference type="RefSeq" id="WP_011621750.1">
    <property type="nucleotide sequence ID" value="NC_008321.1"/>
</dbReference>
<dbReference type="SMR" id="Q0HLM9"/>
<dbReference type="KEGG" id="she:Shewmr4_0958"/>
<dbReference type="HOGENOM" id="CLU_017633_0_7_6"/>
<dbReference type="GO" id="GO:0005737">
    <property type="term" value="C:cytoplasm"/>
    <property type="evidence" value="ECO:0007669"/>
    <property type="project" value="UniProtKB-SubCell"/>
</dbReference>
<dbReference type="GO" id="GO:0005524">
    <property type="term" value="F:ATP binding"/>
    <property type="evidence" value="ECO:0007669"/>
    <property type="project" value="InterPro"/>
</dbReference>
<dbReference type="GO" id="GO:0031072">
    <property type="term" value="F:heat shock protein binding"/>
    <property type="evidence" value="ECO:0007669"/>
    <property type="project" value="InterPro"/>
</dbReference>
<dbReference type="GO" id="GO:0051082">
    <property type="term" value="F:unfolded protein binding"/>
    <property type="evidence" value="ECO:0007669"/>
    <property type="project" value="UniProtKB-UniRule"/>
</dbReference>
<dbReference type="GO" id="GO:0008270">
    <property type="term" value="F:zinc ion binding"/>
    <property type="evidence" value="ECO:0007669"/>
    <property type="project" value="UniProtKB-UniRule"/>
</dbReference>
<dbReference type="GO" id="GO:0051085">
    <property type="term" value="P:chaperone cofactor-dependent protein refolding"/>
    <property type="evidence" value="ECO:0007669"/>
    <property type="project" value="TreeGrafter"/>
</dbReference>
<dbReference type="GO" id="GO:0006260">
    <property type="term" value="P:DNA replication"/>
    <property type="evidence" value="ECO:0007669"/>
    <property type="project" value="UniProtKB-KW"/>
</dbReference>
<dbReference type="GO" id="GO:0042026">
    <property type="term" value="P:protein refolding"/>
    <property type="evidence" value="ECO:0007669"/>
    <property type="project" value="TreeGrafter"/>
</dbReference>
<dbReference type="GO" id="GO:0009408">
    <property type="term" value="P:response to heat"/>
    <property type="evidence" value="ECO:0007669"/>
    <property type="project" value="InterPro"/>
</dbReference>
<dbReference type="CDD" id="cd06257">
    <property type="entry name" value="DnaJ"/>
    <property type="match status" value="1"/>
</dbReference>
<dbReference type="CDD" id="cd10747">
    <property type="entry name" value="DnaJ_C"/>
    <property type="match status" value="1"/>
</dbReference>
<dbReference type="CDD" id="cd10719">
    <property type="entry name" value="DnaJ_zf"/>
    <property type="match status" value="1"/>
</dbReference>
<dbReference type="FunFam" id="1.10.287.110:FF:000003">
    <property type="entry name" value="Molecular chaperone DnaJ"/>
    <property type="match status" value="1"/>
</dbReference>
<dbReference type="FunFam" id="2.10.230.10:FF:000002">
    <property type="entry name" value="Molecular chaperone DnaJ"/>
    <property type="match status" value="1"/>
</dbReference>
<dbReference type="FunFam" id="2.60.260.20:FF:000004">
    <property type="entry name" value="Molecular chaperone DnaJ"/>
    <property type="match status" value="1"/>
</dbReference>
<dbReference type="Gene3D" id="1.10.287.110">
    <property type="entry name" value="DnaJ domain"/>
    <property type="match status" value="1"/>
</dbReference>
<dbReference type="Gene3D" id="2.10.230.10">
    <property type="entry name" value="Heat shock protein DnaJ, cysteine-rich domain"/>
    <property type="match status" value="1"/>
</dbReference>
<dbReference type="Gene3D" id="2.60.260.20">
    <property type="entry name" value="Urease metallochaperone UreE, N-terminal domain"/>
    <property type="match status" value="2"/>
</dbReference>
<dbReference type="HAMAP" id="MF_01152">
    <property type="entry name" value="DnaJ"/>
    <property type="match status" value="1"/>
</dbReference>
<dbReference type="InterPro" id="IPR012724">
    <property type="entry name" value="DnaJ"/>
</dbReference>
<dbReference type="InterPro" id="IPR002939">
    <property type="entry name" value="DnaJ_C"/>
</dbReference>
<dbReference type="InterPro" id="IPR001623">
    <property type="entry name" value="DnaJ_domain"/>
</dbReference>
<dbReference type="InterPro" id="IPR018253">
    <property type="entry name" value="DnaJ_domain_CS"/>
</dbReference>
<dbReference type="InterPro" id="IPR008971">
    <property type="entry name" value="HSP40/DnaJ_pept-bd"/>
</dbReference>
<dbReference type="InterPro" id="IPR001305">
    <property type="entry name" value="HSP_DnaJ_Cys-rich_dom"/>
</dbReference>
<dbReference type="InterPro" id="IPR036410">
    <property type="entry name" value="HSP_DnaJ_Cys-rich_dom_sf"/>
</dbReference>
<dbReference type="InterPro" id="IPR036869">
    <property type="entry name" value="J_dom_sf"/>
</dbReference>
<dbReference type="NCBIfam" id="TIGR02349">
    <property type="entry name" value="DnaJ_bact"/>
    <property type="match status" value="1"/>
</dbReference>
<dbReference type="NCBIfam" id="NF008035">
    <property type="entry name" value="PRK10767.1"/>
    <property type="match status" value="1"/>
</dbReference>
<dbReference type="PANTHER" id="PTHR43096:SF48">
    <property type="entry name" value="CHAPERONE PROTEIN DNAJ"/>
    <property type="match status" value="1"/>
</dbReference>
<dbReference type="PANTHER" id="PTHR43096">
    <property type="entry name" value="DNAJ HOMOLOG 1, MITOCHONDRIAL-RELATED"/>
    <property type="match status" value="1"/>
</dbReference>
<dbReference type="Pfam" id="PF00226">
    <property type="entry name" value="DnaJ"/>
    <property type="match status" value="1"/>
</dbReference>
<dbReference type="Pfam" id="PF01556">
    <property type="entry name" value="DnaJ_C"/>
    <property type="match status" value="1"/>
</dbReference>
<dbReference type="Pfam" id="PF00684">
    <property type="entry name" value="DnaJ_CXXCXGXG"/>
    <property type="match status" value="1"/>
</dbReference>
<dbReference type="PRINTS" id="PR00625">
    <property type="entry name" value="JDOMAIN"/>
</dbReference>
<dbReference type="SMART" id="SM00271">
    <property type="entry name" value="DnaJ"/>
    <property type="match status" value="1"/>
</dbReference>
<dbReference type="SUPFAM" id="SSF46565">
    <property type="entry name" value="Chaperone J-domain"/>
    <property type="match status" value="1"/>
</dbReference>
<dbReference type="SUPFAM" id="SSF57938">
    <property type="entry name" value="DnaJ/Hsp40 cysteine-rich domain"/>
    <property type="match status" value="1"/>
</dbReference>
<dbReference type="SUPFAM" id="SSF49493">
    <property type="entry name" value="HSP40/DnaJ peptide-binding domain"/>
    <property type="match status" value="2"/>
</dbReference>
<dbReference type="PROSITE" id="PS00636">
    <property type="entry name" value="DNAJ_1"/>
    <property type="match status" value="1"/>
</dbReference>
<dbReference type="PROSITE" id="PS50076">
    <property type="entry name" value="DNAJ_2"/>
    <property type="match status" value="1"/>
</dbReference>
<dbReference type="PROSITE" id="PS51188">
    <property type="entry name" value="ZF_CR"/>
    <property type="match status" value="1"/>
</dbReference>
<organism>
    <name type="scientific">Shewanella sp. (strain MR-4)</name>
    <dbReference type="NCBI Taxonomy" id="60480"/>
    <lineage>
        <taxon>Bacteria</taxon>
        <taxon>Pseudomonadati</taxon>
        <taxon>Pseudomonadota</taxon>
        <taxon>Gammaproteobacteria</taxon>
        <taxon>Alteromonadales</taxon>
        <taxon>Shewanellaceae</taxon>
        <taxon>Shewanella</taxon>
    </lineage>
</organism>
<name>DNAJ_SHESM</name>